<organism>
    <name type="scientific">Danio rerio</name>
    <name type="common">Zebrafish</name>
    <name type="synonym">Brachydanio rerio</name>
    <dbReference type="NCBI Taxonomy" id="7955"/>
    <lineage>
        <taxon>Eukaryota</taxon>
        <taxon>Metazoa</taxon>
        <taxon>Chordata</taxon>
        <taxon>Craniata</taxon>
        <taxon>Vertebrata</taxon>
        <taxon>Euteleostomi</taxon>
        <taxon>Actinopterygii</taxon>
        <taxon>Neopterygii</taxon>
        <taxon>Teleostei</taxon>
        <taxon>Ostariophysi</taxon>
        <taxon>Cypriniformes</taxon>
        <taxon>Danionidae</taxon>
        <taxon>Danioninae</taxon>
        <taxon>Danio</taxon>
    </lineage>
</organism>
<comment type="function">
    <text evidence="1 6">Histone lysine demethylase with selectivity for the di- and monomethyl states that plays a key role cell cycle progression, rDNA transcription and brain development. Demethylates mono- and dimethylated histone H3 'Lys-9' residue (H3K9Me1 and H3K9Me2), dimethylated H3 'Lys-27' (H3K27Me2) and monomethylated histone H4 'Lys-20' residue (H4K20Me1). Acts as a transcription activator as H3K9Me1, H3K9Me2, H3K27Me2 and H4K20Me1 are epigenetic repressive marks. Involved in cell cycle progression by being required to control G1-S transition. Acts as a coactivator of rDNA transcription, by activating polymerase I (pol I) mediated transcription of rRNA genes. Has activity toward H4K20Me1 only when nucleosome is used as a substrate and when not histone octamer is used as substrate (By similarity). Required for brain development, probably by regulating expression of neuron-specific genes.</text>
</comment>
<comment type="catalytic activity">
    <reaction evidence="2">
        <text>N(6),N(6)-dimethyl-L-lysyl(36)-[histone H3] + 2 2-oxoglutarate + 2 O2 = L-lysyl(36)-[histone H3] + 2 formaldehyde + 2 succinate + 2 CO2</text>
        <dbReference type="Rhea" id="RHEA:42032"/>
        <dbReference type="Rhea" id="RHEA-COMP:9785"/>
        <dbReference type="Rhea" id="RHEA-COMP:9787"/>
        <dbReference type="ChEBI" id="CHEBI:15379"/>
        <dbReference type="ChEBI" id="CHEBI:16526"/>
        <dbReference type="ChEBI" id="CHEBI:16810"/>
        <dbReference type="ChEBI" id="CHEBI:16842"/>
        <dbReference type="ChEBI" id="CHEBI:29969"/>
        <dbReference type="ChEBI" id="CHEBI:30031"/>
        <dbReference type="ChEBI" id="CHEBI:61976"/>
        <dbReference type="EC" id="1.14.11.27"/>
    </reaction>
</comment>
<comment type="catalytic activity">
    <reaction evidence="2">
        <text>N(6),N(6)-dimethyl-L-lysyl(9)-[histone H3] + 2 2-oxoglutarate + 2 O2 = L-lysyl(9)-[histone H3] + 2 formaldehyde + 2 succinate + 2 CO2</text>
        <dbReference type="Rhea" id="RHEA:60188"/>
        <dbReference type="Rhea" id="RHEA-COMP:15541"/>
        <dbReference type="Rhea" id="RHEA-COMP:15546"/>
        <dbReference type="ChEBI" id="CHEBI:15379"/>
        <dbReference type="ChEBI" id="CHEBI:16526"/>
        <dbReference type="ChEBI" id="CHEBI:16810"/>
        <dbReference type="ChEBI" id="CHEBI:16842"/>
        <dbReference type="ChEBI" id="CHEBI:29969"/>
        <dbReference type="ChEBI" id="CHEBI:30031"/>
        <dbReference type="ChEBI" id="CHEBI:61976"/>
        <dbReference type="EC" id="1.14.11.65"/>
    </reaction>
</comment>
<comment type="cofactor">
    <cofactor evidence="1">
        <name>Fe(2+)</name>
        <dbReference type="ChEBI" id="CHEBI:29033"/>
    </cofactor>
    <text evidence="1">Binds 1 Fe(2+) ion per subunit.</text>
</comment>
<comment type="subcellular location">
    <subcellularLocation>
        <location evidence="1">Nucleus</location>
    </subcellularLocation>
    <subcellularLocation>
        <location evidence="1">Nucleus</location>
        <location evidence="1">Nucleolus</location>
    </subcellularLocation>
    <text evidence="1">Recruited to H3K4me3 sites on chromatin during interphase. Dissociates from chromatin when cells enter mitosis (By similarity).</text>
</comment>
<comment type="developmental stage">
    <text>First detected at 14 hours post-fertilization (hpf) in the head and tail regions. Found mostly in the head region. Also detectable in the jaw of the embryo at 3 dpf.</text>
</comment>
<comment type="domain">
    <text evidence="1">The PHD-type zinc finger mediates the binding to H3K4me3. Binding to H3K4me3 promotes its access to H3K9me2 (By similarity).</text>
</comment>
<comment type="domain">
    <text evidence="1">The linker region is a critical determinant of demethylase specificity. It enables the active site of JmjC to reach the target H3K9me2 when the PHD-type zinc finger binds to H3K4me3 (By similarity).</text>
</comment>
<comment type="disruption phenotype">
    <text evidence="6">Morpholino knockdown of the protein results in defects in brain and craniofacial development. Embryos show delays in brain development at 24 hpf and apoptosis in the developing brain and the neural tube at 30 hpf.</text>
</comment>
<comment type="similarity">
    <text evidence="7">Belongs to the JHDM1 histone demethylase family. JHDM1D subfamily.</text>
</comment>
<name>PHF8_DANRE</name>
<sequence>MASVPVYCLCRLPYDVTRFMIECDVCQDWFHGSCVGVEEDKAAEIDLYHCPNCQVTHGPSVMRKRRGAVKHADVGLGRDSGRPVKTGSAQFVRELRCRTFPSADEVLLKPTGAQLTVEFLEERSFSVPVLVLRKDGLGMNLPPSSFSVTDVEHYIGTEKEIDVIDVSRQADLKMKLGEFVEYYNSPNRDRVLNVISLEFSDTRLSNLVETPKIVRKLSWVENLWPEESIFERPNVQKYCLMGVKDSYTDFHIDFGGTSVWYHVLRGEKIFYLIRPTAANLSLFERWSSSSNQNELFFGDQVDMCYKCSVKQGNTLFIPTGWIHAVLTPVDCLAFGGNFLHSLNIDMQLRAYEIEKRLSTADLFKFPNFETVCWYVGKHLLDTFRGLRENRRHPATYLVHGAKALNNAFRGWTRKESLGEHEQEIPDTIKTQQLVKDLAKEIRLVEDIFQQNIGRSGTPFGGSQGLPSPHPKAQLNTPLTFSQHLSKKRGPKPKEAFGGGGVGPPGAKKKSQKGKEIKTEAGELDLLEIHTKHTLKKFQPGCKVKKSKLELPDDCLDDFEEKINKSKLKLVLTNGKLQGKKGRAGSANGAGSSLQQFQPHMATLSDFDSEDELQIDETPPPRRRPSLPSKKKLAGLPRKLPRAKPCSDPHRIREPGEVDFDIEEDYTTDEEMLTMQGVKGGAGGILDLLKASKQVAGLDSALSEEAPASPSTRDAIQGMLSMANPPSSSSSSSSSSPLSISGGGEMMGLMKEKGGREGWMSGVKKSERKAVFQRPGKRPIKRPARHLSDDESLDEQETLGTCFKDSDYVYPSLESDEEDHVSKSKMKRKRNWDDTPWSPKARVTPTLPKQERPVREGARVASVETGLAAAAAKLAQQEQQKTITKRKYTKKKTPQEKVHSTVAQLQHQPDSAPVSPPLPSEPPVDCIVEERRVEVYSASLLDHEYTAGPGPFSPGGPRGSGAMAPGVFLTSRRPSLSPQNSSSYSPSAPSPGGLVTPTSAGACQGKRPKKGLATAKQRLGKILKIHRNGKLLL</sequence>
<protein>
    <recommendedName>
        <fullName>Histone lysine demethylase PHF8</fullName>
        <ecNumber evidence="2">1.14.11.27</ecNumber>
        <ecNumber evidence="2">1.14.11.65</ecNumber>
    </recommendedName>
    <alternativeName>
        <fullName>PHD finger protein 8</fullName>
        <shortName>zPHF8</shortName>
    </alternativeName>
    <alternativeName>
        <fullName evidence="7">[histone H3]-dimethyl-L-lysine(36) demethylase PHF8</fullName>
    </alternativeName>
    <alternativeName>
        <fullName evidence="7">[histone H3]-dimethyl-L-lysine(9) demethylase PHF8</fullName>
    </alternativeName>
</protein>
<reference key="1">
    <citation type="journal article" date="2013" name="Nature">
        <title>The zebrafish reference genome sequence and its relationship to the human genome.</title>
        <authorList>
            <person name="Howe K."/>
            <person name="Clark M.D."/>
            <person name="Torroja C.F."/>
            <person name="Torrance J."/>
            <person name="Berthelot C."/>
            <person name="Muffato M."/>
            <person name="Collins J.E."/>
            <person name="Humphray S."/>
            <person name="McLaren K."/>
            <person name="Matthews L."/>
            <person name="McLaren S."/>
            <person name="Sealy I."/>
            <person name="Caccamo M."/>
            <person name="Churcher C."/>
            <person name="Scott C."/>
            <person name="Barrett J.C."/>
            <person name="Koch R."/>
            <person name="Rauch G.J."/>
            <person name="White S."/>
            <person name="Chow W."/>
            <person name="Kilian B."/>
            <person name="Quintais L.T."/>
            <person name="Guerra-Assuncao J.A."/>
            <person name="Zhou Y."/>
            <person name="Gu Y."/>
            <person name="Yen J."/>
            <person name="Vogel J.H."/>
            <person name="Eyre T."/>
            <person name="Redmond S."/>
            <person name="Banerjee R."/>
            <person name="Chi J."/>
            <person name="Fu B."/>
            <person name="Langley E."/>
            <person name="Maguire S.F."/>
            <person name="Laird G.K."/>
            <person name="Lloyd D."/>
            <person name="Kenyon E."/>
            <person name="Donaldson S."/>
            <person name="Sehra H."/>
            <person name="Almeida-King J."/>
            <person name="Loveland J."/>
            <person name="Trevanion S."/>
            <person name="Jones M."/>
            <person name="Quail M."/>
            <person name="Willey D."/>
            <person name="Hunt A."/>
            <person name="Burton J."/>
            <person name="Sims S."/>
            <person name="McLay K."/>
            <person name="Plumb B."/>
            <person name="Davis J."/>
            <person name="Clee C."/>
            <person name="Oliver K."/>
            <person name="Clark R."/>
            <person name="Riddle C."/>
            <person name="Elliot D."/>
            <person name="Threadgold G."/>
            <person name="Harden G."/>
            <person name="Ware D."/>
            <person name="Begum S."/>
            <person name="Mortimore B."/>
            <person name="Kerry G."/>
            <person name="Heath P."/>
            <person name="Phillimore B."/>
            <person name="Tracey A."/>
            <person name="Corby N."/>
            <person name="Dunn M."/>
            <person name="Johnson C."/>
            <person name="Wood J."/>
            <person name="Clark S."/>
            <person name="Pelan S."/>
            <person name="Griffiths G."/>
            <person name="Smith M."/>
            <person name="Glithero R."/>
            <person name="Howden P."/>
            <person name="Barker N."/>
            <person name="Lloyd C."/>
            <person name="Stevens C."/>
            <person name="Harley J."/>
            <person name="Holt K."/>
            <person name="Panagiotidis G."/>
            <person name="Lovell J."/>
            <person name="Beasley H."/>
            <person name="Henderson C."/>
            <person name="Gordon D."/>
            <person name="Auger K."/>
            <person name="Wright D."/>
            <person name="Collins J."/>
            <person name="Raisen C."/>
            <person name="Dyer L."/>
            <person name="Leung K."/>
            <person name="Robertson L."/>
            <person name="Ambridge K."/>
            <person name="Leongamornlert D."/>
            <person name="McGuire S."/>
            <person name="Gilderthorp R."/>
            <person name="Griffiths C."/>
            <person name="Manthravadi D."/>
            <person name="Nichol S."/>
            <person name="Barker G."/>
            <person name="Whitehead S."/>
            <person name="Kay M."/>
            <person name="Brown J."/>
            <person name="Murnane C."/>
            <person name="Gray E."/>
            <person name="Humphries M."/>
            <person name="Sycamore N."/>
            <person name="Barker D."/>
            <person name="Saunders D."/>
            <person name="Wallis J."/>
            <person name="Babbage A."/>
            <person name="Hammond S."/>
            <person name="Mashreghi-Mohammadi M."/>
            <person name="Barr L."/>
            <person name="Martin S."/>
            <person name="Wray P."/>
            <person name="Ellington A."/>
            <person name="Matthews N."/>
            <person name="Ellwood M."/>
            <person name="Woodmansey R."/>
            <person name="Clark G."/>
            <person name="Cooper J."/>
            <person name="Tromans A."/>
            <person name="Grafham D."/>
            <person name="Skuce C."/>
            <person name="Pandian R."/>
            <person name="Andrews R."/>
            <person name="Harrison E."/>
            <person name="Kimberley A."/>
            <person name="Garnett J."/>
            <person name="Fosker N."/>
            <person name="Hall R."/>
            <person name="Garner P."/>
            <person name="Kelly D."/>
            <person name="Bird C."/>
            <person name="Palmer S."/>
            <person name="Gehring I."/>
            <person name="Berger A."/>
            <person name="Dooley C.M."/>
            <person name="Ersan-Urun Z."/>
            <person name="Eser C."/>
            <person name="Geiger H."/>
            <person name="Geisler M."/>
            <person name="Karotki L."/>
            <person name="Kirn A."/>
            <person name="Konantz J."/>
            <person name="Konantz M."/>
            <person name="Oberlander M."/>
            <person name="Rudolph-Geiger S."/>
            <person name="Teucke M."/>
            <person name="Lanz C."/>
            <person name="Raddatz G."/>
            <person name="Osoegawa K."/>
            <person name="Zhu B."/>
            <person name="Rapp A."/>
            <person name="Widaa S."/>
            <person name="Langford C."/>
            <person name="Yang F."/>
            <person name="Schuster S.C."/>
            <person name="Carter N.P."/>
            <person name="Harrow J."/>
            <person name="Ning Z."/>
            <person name="Herrero J."/>
            <person name="Searle S.M."/>
            <person name="Enright A."/>
            <person name="Geisler R."/>
            <person name="Plasterk R.H."/>
            <person name="Lee C."/>
            <person name="Westerfield M."/>
            <person name="de Jong P.J."/>
            <person name="Zon L.I."/>
            <person name="Postlethwait J.H."/>
            <person name="Nusslein-Volhard C."/>
            <person name="Hubbard T.J."/>
            <person name="Roest Crollius H."/>
            <person name="Rogers J."/>
            <person name="Stemple D.L."/>
        </authorList>
    </citation>
    <scope>NUCLEOTIDE SEQUENCE [LARGE SCALE GENOMIC DNA]</scope>
    <source>
        <strain>Tuebingen</strain>
    </source>
</reference>
<reference key="2">
    <citation type="journal article" date="2010" name="Nature">
        <title>Histone H4K20/H3K9 demethylase PHF8 regulates zebrafish brain and craniofacial development.</title>
        <authorList>
            <person name="Qi H.H."/>
            <person name="Sarkissian M."/>
            <person name="Hu G.Q."/>
            <person name="Wang Z."/>
            <person name="Bhattacharjee A."/>
            <person name="Gordon D.B."/>
            <person name="Gonzales M."/>
            <person name="Lan F."/>
            <person name="Ongusaha P.P."/>
            <person name="Huarte M."/>
            <person name="Yaghi N.K."/>
            <person name="Lim H."/>
            <person name="Garcia B.A."/>
            <person name="Brizuela L."/>
            <person name="Zhao K."/>
            <person name="Roberts T.M."/>
            <person name="Shi Y."/>
        </authorList>
    </citation>
    <scope>FUNCTION</scope>
    <scope>TISSUE SPECIFICITY</scope>
    <scope>DISRUPTION PHENOTYPE</scope>
    <scope>MUTAGENESIS OF HIS-323</scope>
</reference>
<evidence type="ECO:0000250" key="1"/>
<evidence type="ECO:0000250" key="2">
    <source>
        <dbReference type="UniProtKB" id="Q9UPP1"/>
    </source>
</evidence>
<evidence type="ECO:0000255" key="3">
    <source>
        <dbReference type="PROSITE-ProRule" id="PRU00146"/>
    </source>
</evidence>
<evidence type="ECO:0000255" key="4">
    <source>
        <dbReference type="PROSITE-ProRule" id="PRU00538"/>
    </source>
</evidence>
<evidence type="ECO:0000256" key="5">
    <source>
        <dbReference type="SAM" id="MobiDB-lite"/>
    </source>
</evidence>
<evidence type="ECO:0000269" key="6">
    <source>
    </source>
</evidence>
<evidence type="ECO:0000305" key="7"/>
<gene>
    <name type="primary">phf8</name>
</gene>
<feature type="chain" id="PRO_0000399817" description="Histone lysine demethylase PHF8">
    <location>
        <begin position="1"/>
        <end position="1032"/>
    </location>
</feature>
<feature type="domain" description="JmjC" evidence="4">
    <location>
        <begin position="199"/>
        <end position="355"/>
    </location>
</feature>
<feature type="zinc finger region" description="PHD-type" evidence="3">
    <location>
        <begin position="5"/>
        <end position="56"/>
    </location>
</feature>
<feature type="region of interest" description="Linker" evidence="1">
    <location>
        <begin position="65"/>
        <end position="83"/>
    </location>
</feature>
<feature type="region of interest" description="Disordered" evidence="5">
    <location>
        <begin position="455"/>
        <end position="515"/>
    </location>
</feature>
<feature type="region of interest" description="Disordered" evidence="5">
    <location>
        <begin position="577"/>
        <end position="660"/>
    </location>
</feature>
<feature type="region of interest" description="Disordered" evidence="5">
    <location>
        <begin position="697"/>
        <end position="857"/>
    </location>
</feature>
<feature type="region of interest" description="Disordered" evidence="5">
    <location>
        <begin position="875"/>
        <end position="923"/>
    </location>
</feature>
<feature type="region of interest" description="Disordered" evidence="5">
    <location>
        <begin position="943"/>
        <end position="1015"/>
    </location>
</feature>
<feature type="compositionally biased region" description="Polar residues" evidence="5">
    <location>
        <begin position="473"/>
        <end position="483"/>
    </location>
</feature>
<feature type="compositionally biased region" description="Low complexity" evidence="5">
    <location>
        <begin position="583"/>
        <end position="592"/>
    </location>
</feature>
<feature type="compositionally biased region" description="Basic residues" evidence="5">
    <location>
        <begin position="620"/>
        <end position="632"/>
    </location>
</feature>
<feature type="compositionally biased region" description="Basic and acidic residues" evidence="5">
    <location>
        <begin position="644"/>
        <end position="655"/>
    </location>
</feature>
<feature type="compositionally biased region" description="Low complexity" evidence="5">
    <location>
        <begin position="699"/>
        <end position="710"/>
    </location>
</feature>
<feature type="compositionally biased region" description="Low complexity" evidence="5">
    <location>
        <begin position="724"/>
        <end position="739"/>
    </location>
</feature>
<feature type="compositionally biased region" description="Basic residues" evidence="5">
    <location>
        <begin position="774"/>
        <end position="784"/>
    </location>
</feature>
<feature type="compositionally biased region" description="Basic and acidic residues" evidence="5">
    <location>
        <begin position="848"/>
        <end position="857"/>
    </location>
</feature>
<feature type="compositionally biased region" description="Basic residues" evidence="5">
    <location>
        <begin position="882"/>
        <end position="891"/>
    </location>
</feature>
<feature type="compositionally biased region" description="Low complexity" evidence="5">
    <location>
        <begin position="970"/>
        <end position="990"/>
    </location>
</feature>
<feature type="binding site" evidence="1">
    <location>
        <position position="248"/>
    </location>
    <ligand>
        <name>substrate</name>
    </ligand>
</feature>
<feature type="binding site" evidence="4">
    <location>
        <position position="251"/>
    </location>
    <ligand>
        <name>Fe cation</name>
        <dbReference type="ChEBI" id="CHEBI:24875"/>
        <note>catalytic</note>
    </ligand>
</feature>
<feature type="binding site" evidence="4">
    <location>
        <position position="253"/>
    </location>
    <ligand>
        <name>Fe cation</name>
        <dbReference type="ChEBI" id="CHEBI:24875"/>
        <note>catalytic</note>
    </ligand>
</feature>
<feature type="binding site" evidence="1">
    <location>
        <position position="268"/>
    </location>
    <ligand>
        <name>substrate</name>
    </ligand>
</feature>
<feature type="binding site" evidence="4">
    <location>
        <position position="323"/>
    </location>
    <ligand>
        <name>Fe cation</name>
        <dbReference type="ChEBI" id="CHEBI:24875"/>
        <note>catalytic</note>
    </ligand>
</feature>
<feature type="mutagenesis site" description="Unable to rescue a phf8 morpholino mutant." evidence="6">
    <original>H</original>
    <variation>Y</variation>
    <location>
        <position position="323"/>
    </location>
</feature>
<proteinExistence type="evidence at protein level"/>
<accession>P0CH95</accession>
<keyword id="KW-0010">Activator</keyword>
<keyword id="KW-0131">Cell cycle</keyword>
<keyword id="KW-0156">Chromatin regulator</keyword>
<keyword id="KW-0223">Dioxygenase</keyword>
<keyword id="KW-0408">Iron</keyword>
<keyword id="KW-0479">Metal-binding</keyword>
<keyword id="KW-0539">Nucleus</keyword>
<keyword id="KW-0560">Oxidoreductase</keyword>
<keyword id="KW-1185">Reference proteome</keyword>
<keyword id="KW-0804">Transcription</keyword>
<keyword id="KW-0805">Transcription regulation</keyword>
<keyword id="KW-0862">Zinc</keyword>
<keyword id="KW-0863">Zinc-finger</keyword>
<dbReference type="EC" id="1.14.11.27" evidence="2"/>
<dbReference type="EC" id="1.14.11.65" evidence="2"/>
<dbReference type="EMBL" id="CR352210">
    <property type="status" value="NOT_ANNOTATED_CDS"/>
    <property type="molecule type" value="Genomic_DNA"/>
</dbReference>
<dbReference type="RefSeq" id="NP_001189376.1">
    <property type="nucleotide sequence ID" value="NM_001202447.1"/>
</dbReference>
<dbReference type="RefSeq" id="XP_005162322.1">
    <property type="nucleotide sequence ID" value="XM_005162265.5"/>
</dbReference>
<dbReference type="SMR" id="P0CH95"/>
<dbReference type="FunCoup" id="P0CH95">
    <property type="interactions" value="823"/>
</dbReference>
<dbReference type="STRING" id="7955.ENSDARP00000148598"/>
<dbReference type="PaxDb" id="7955-ENSDARP00000007140"/>
<dbReference type="Ensembl" id="ENSDART00000026314">
    <property type="protein sequence ID" value="ENSDARP00000007140"/>
    <property type="gene ID" value="ENSDARG00000006584"/>
</dbReference>
<dbReference type="Ensembl" id="ENSDART00000183639">
    <property type="protein sequence ID" value="ENSDARP00000148598"/>
    <property type="gene ID" value="ENSDARG00000006584"/>
</dbReference>
<dbReference type="GeneID" id="566534"/>
<dbReference type="KEGG" id="dre:566534"/>
<dbReference type="AGR" id="ZFIN:ZDB-GENE-060419-1"/>
<dbReference type="CTD" id="23133"/>
<dbReference type="ZFIN" id="ZDB-GENE-060419-1">
    <property type="gene designation" value="phf8"/>
</dbReference>
<dbReference type="eggNOG" id="KOG1633">
    <property type="taxonomic scope" value="Eukaryota"/>
</dbReference>
<dbReference type="HOGENOM" id="CLU_003540_2_0_1"/>
<dbReference type="InParanoid" id="P0CH95"/>
<dbReference type="OMA" id="DIFHQNI"/>
<dbReference type="OrthoDB" id="5876800at2759"/>
<dbReference type="PhylomeDB" id="P0CH95"/>
<dbReference type="TreeFam" id="TF106480"/>
<dbReference type="BRENDA" id="1.14.11.65">
    <property type="organism ID" value="928"/>
</dbReference>
<dbReference type="Reactome" id="R-DRE-2299718">
    <property type="pathway name" value="Condensation of Prophase Chromosomes"/>
</dbReference>
<dbReference type="Reactome" id="R-DRE-3214842">
    <property type="pathway name" value="HDMs demethylate histones"/>
</dbReference>
<dbReference type="PRO" id="PR:P0CH95"/>
<dbReference type="Proteomes" id="UP000000437">
    <property type="component" value="Chromosome 23"/>
</dbReference>
<dbReference type="Bgee" id="ENSDARG00000006584">
    <property type="expression patterns" value="Expressed in testis and 29 other cell types or tissues"/>
</dbReference>
<dbReference type="GO" id="GO:0005730">
    <property type="term" value="C:nucleolus"/>
    <property type="evidence" value="ECO:0000250"/>
    <property type="project" value="UniProtKB"/>
</dbReference>
<dbReference type="GO" id="GO:0003682">
    <property type="term" value="F:chromatin binding"/>
    <property type="evidence" value="ECO:0000250"/>
    <property type="project" value="UniProtKB"/>
</dbReference>
<dbReference type="GO" id="GO:0032452">
    <property type="term" value="F:histone demethylase activity"/>
    <property type="evidence" value="ECO:0000318"/>
    <property type="project" value="GO_Central"/>
</dbReference>
<dbReference type="GO" id="GO:0071558">
    <property type="term" value="F:histone H3K27me2/H3K27me3 demethylase activity"/>
    <property type="evidence" value="ECO:0000250"/>
    <property type="project" value="UniProtKB"/>
</dbReference>
<dbReference type="GO" id="GO:0051864">
    <property type="term" value="F:histone H3K36 demethylase activity"/>
    <property type="evidence" value="ECO:0000250"/>
    <property type="project" value="UniProtKB"/>
</dbReference>
<dbReference type="GO" id="GO:0140680">
    <property type="term" value="F:histone H3K36me/H3K36me2 demethylase activity"/>
    <property type="evidence" value="ECO:0007669"/>
    <property type="project" value="UniProtKB-EC"/>
</dbReference>
<dbReference type="GO" id="GO:0140002">
    <property type="term" value="F:histone H3K4me3 reader activity"/>
    <property type="evidence" value="ECO:0000250"/>
    <property type="project" value="UniProtKB"/>
</dbReference>
<dbReference type="GO" id="GO:0032454">
    <property type="term" value="F:histone H3K9 demethylase activity"/>
    <property type="evidence" value="ECO:0000250"/>
    <property type="project" value="UniProtKB"/>
</dbReference>
<dbReference type="GO" id="GO:0140683">
    <property type="term" value="F:histone H3K9me/H3K9me2 demethylase activity"/>
    <property type="evidence" value="ECO:0007669"/>
    <property type="project" value="UniProtKB-EC"/>
</dbReference>
<dbReference type="GO" id="GO:0035575">
    <property type="term" value="F:histone H4K20 demethylase activity"/>
    <property type="evidence" value="ECO:0000250"/>
    <property type="project" value="UniProtKB"/>
</dbReference>
<dbReference type="GO" id="GO:0003712">
    <property type="term" value="F:transcription coregulator activity"/>
    <property type="evidence" value="ECO:0000318"/>
    <property type="project" value="GO_Central"/>
</dbReference>
<dbReference type="GO" id="GO:0008270">
    <property type="term" value="F:zinc ion binding"/>
    <property type="evidence" value="ECO:0007669"/>
    <property type="project" value="UniProtKB-KW"/>
</dbReference>
<dbReference type="GO" id="GO:0007420">
    <property type="term" value="P:brain development"/>
    <property type="evidence" value="ECO:0000315"/>
    <property type="project" value="UniProtKB"/>
</dbReference>
<dbReference type="GO" id="GO:0006338">
    <property type="term" value="P:chromatin remodeling"/>
    <property type="evidence" value="ECO:0000318"/>
    <property type="project" value="GO_Central"/>
</dbReference>
<dbReference type="GO" id="GO:0048703">
    <property type="term" value="P:embryonic viscerocranium morphogenesis"/>
    <property type="evidence" value="ECO:0000315"/>
    <property type="project" value="ZFIN"/>
</dbReference>
<dbReference type="GO" id="GO:0000082">
    <property type="term" value="P:G1/S transition of mitotic cell cycle"/>
    <property type="evidence" value="ECO:0000250"/>
    <property type="project" value="UniProtKB"/>
</dbReference>
<dbReference type="GO" id="GO:0042472">
    <property type="term" value="P:inner ear morphogenesis"/>
    <property type="evidence" value="ECO:0000315"/>
    <property type="project" value="ZFIN"/>
</dbReference>
<dbReference type="GO" id="GO:0061188">
    <property type="term" value="P:negative regulation of rDNA heterochromatin formation"/>
    <property type="evidence" value="ECO:0000250"/>
    <property type="project" value="UniProtKB"/>
</dbReference>
<dbReference type="GO" id="GO:0045893">
    <property type="term" value="P:positive regulation of DNA-templated transcription"/>
    <property type="evidence" value="ECO:0000315"/>
    <property type="project" value="UniProtKB"/>
</dbReference>
<dbReference type="GO" id="GO:0045943">
    <property type="term" value="P:positive regulation of transcription by RNA polymerase I"/>
    <property type="evidence" value="ECO:0000250"/>
    <property type="project" value="UniProtKB"/>
</dbReference>
<dbReference type="GO" id="GO:0048922">
    <property type="term" value="P:posterior lateral line neuromast deposition"/>
    <property type="evidence" value="ECO:0000315"/>
    <property type="project" value="ZFIN"/>
</dbReference>
<dbReference type="GO" id="GO:0060319">
    <property type="term" value="P:primitive erythrocyte differentiation"/>
    <property type="evidence" value="ECO:0000315"/>
    <property type="project" value="ZFIN"/>
</dbReference>
<dbReference type="GO" id="GO:0043523">
    <property type="term" value="P:regulation of neuron apoptotic process"/>
    <property type="evidence" value="ECO:0000316"/>
    <property type="project" value="ZFIN"/>
</dbReference>
<dbReference type="GO" id="GO:0006357">
    <property type="term" value="P:regulation of transcription by RNA polymerase II"/>
    <property type="evidence" value="ECO:0000318"/>
    <property type="project" value="GO_Central"/>
</dbReference>
<dbReference type="CDD" id="cd15642">
    <property type="entry name" value="PHD_PHF8"/>
    <property type="match status" value="1"/>
</dbReference>
<dbReference type="FunFam" id="1.20.58.1360:FF:000001">
    <property type="entry name" value="Histone lysine demethylase PHF8"/>
    <property type="match status" value="1"/>
</dbReference>
<dbReference type="FunFam" id="2.60.120.650:FF:000006">
    <property type="entry name" value="histone lysine demethylase PHF8 isoform X1"/>
    <property type="match status" value="1"/>
</dbReference>
<dbReference type="FunFam" id="3.30.40.10:FF:000193">
    <property type="entry name" value="lysine-specific demethylase PHF2 isoform X1"/>
    <property type="match status" value="1"/>
</dbReference>
<dbReference type="Gene3D" id="1.20.58.1360">
    <property type="match status" value="1"/>
</dbReference>
<dbReference type="Gene3D" id="2.60.120.650">
    <property type="entry name" value="Cupin"/>
    <property type="match status" value="1"/>
</dbReference>
<dbReference type="InterPro" id="IPR041070">
    <property type="entry name" value="JHD"/>
</dbReference>
<dbReference type="InterPro" id="IPR050690">
    <property type="entry name" value="JHDM1_Histone_Demethylase"/>
</dbReference>
<dbReference type="InterPro" id="IPR003347">
    <property type="entry name" value="JmjC_dom"/>
</dbReference>
<dbReference type="InterPro" id="IPR019786">
    <property type="entry name" value="Zinc_finger_PHD-type_CS"/>
</dbReference>
<dbReference type="InterPro" id="IPR011011">
    <property type="entry name" value="Znf_FYVE_PHD"/>
</dbReference>
<dbReference type="InterPro" id="IPR001965">
    <property type="entry name" value="Znf_PHD"/>
</dbReference>
<dbReference type="InterPro" id="IPR019787">
    <property type="entry name" value="Znf_PHD-finger"/>
</dbReference>
<dbReference type="PANTHER" id="PTHR23123">
    <property type="entry name" value="PHD/F-BOX CONTAINING PROTEIN"/>
    <property type="match status" value="1"/>
</dbReference>
<dbReference type="Pfam" id="PF17811">
    <property type="entry name" value="JHD"/>
    <property type="match status" value="1"/>
</dbReference>
<dbReference type="Pfam" id="PF02373">
    <property type="entry name" value="JmjC"/>
    <property type="match status" value="1"/>
</dbReference>
<dbReference type="Pfam" id="PF00628">
    <property type="entry name" value="PHD"/>
    <property type="match status" value="1"/>
</dbReference>
<dbReference type="SMART" id="SM00558">
    <property type="entry name" value="JmjC"/>
    <property type="match status" value="1"/>
</dbReference>
<dbReference type="SMART" id="SM00249">
    <property type="entry name" value="PHD"/>
    <property type="match status" value="1"/>
</dbReference>
<dbReference type="SUPFAM" id="SSF51197">
    <property type="entry name" value="Clavaminate synthase-like"/>
    <property type="match status" value="1"/>
</dbReference>
<dbReference type="SUPFAM" id="SSF57903">
    <property type="entry name" value="FYVE/PHD zinc finger"/>
    <property type="match status" value="1"/>
</dbReference>
<dbReference type="PROSITE" id="PS51184">
    <property type="entry name" value="JMJC"/>
    <property type="match status" value="1"/>
</dbReference>
<dbReference type="PROSITE" id="PS01359">
    <property type="entry name" value="ZF_PHD_1"/>
    <property type="match status" value="1"/>
</dbReference>
<dbReference type="PROSITE" id="PS50016">
    <property type="entry name" value="ZF_PHD_2"/>
    <property type="match status" value="1"/>
</dbReference>